<dbReference type="EC" id="4.3.2.10" evidence="1"/>
<dbReference type="EMBL" id="CP000671">
    <property type="protein sequence ID" value="ABQ97616.1"/>
    <property type="molecule type" value="Genomic_DNA"/>
</dbReference>
<dbReference type="SMR" id="A5UA15"/>
<dbReference type="KEGG" id="hip:CGSHiEE_00620"/>
<dbReference type="HOGENOM" id="CLU_048577_4_0_6"/>
<dbReference type="UniPathway" id="UPA00031">
    <property type="reaction ID" value="UER00010"/>
</dbReference>
<dbReference type="GO" id="GO:0005737">
    <property type="term" value="C:cytoplasm"/>
    <property type="evidence" value="ECO:0007669"/>
    <property type="project" value="UniProtKB-SubCell"/>
</dbReference>
<dbReference type="GO" id="GO:0000107">
    <property type="term" value="F:imidazoleglycerol-phosphate synthase activity"/>
    <property type="evidence" value="ECO:0007669"/>
    <property type="project" value="UniProtKB-UniRule"/>
</dbReference>
<dbReference type="GO" id="GO:0016829">
    <property type="term" value="F:lyase activity"/>
    <property type="evidence" value="ECO:0007669"/>
    <property type="project" value="UniProtKB-KW"/>
</dbReference>
<dbReference type="GO" id="GO:0000105">
    <property type="term" value="P:L-histidine biosynthetic process"/>
    <property type="evidence" value="ECO:0007669"/>
    <property type="project" value="UniProtKB-UniRule"/>
</dbReference>
<dbReference type="CDD" id="cd04731">
    <property type="entry name" value="HisF"/>
    <property type="match status" value="1"/>
</dbReference>
<dbReference type="FunFam" id="3.20.20.70:FF:000006">
    <property type="entry name" value="Imidazole glycerol phosphate synthase subunit HisF"/>
    <property type="match status" value="1"/>
</dbReference>
<dbReference type="Gene3D" id="3.20.20.70">
    <property type="entry name" value="Aldolase class I"/>
    <property type="match status" value="1"/>
</dbReference>
<dbReference type="HAMAP" id="MF_01013">
    <property type="entry name" value="HisF"/>
    <property type="match status" value="1"/>
</dbReference>
<dbReference type="InterPro" id="IPR013785">
    <property type="entry name" value="Aldolase_TIM"/>
</dbReference>
<dbReference type="InterPro" id="IPR006062">
    <property type="entry name" value="His_biosynth"/>
</dbReference>
<dbReference type="InterPro" id="IPR004651">
    <property type="entry name" value="HisF"/>
</dbReference>
<dbReference type="InterPro" id="IPR050064">
    <property type="entry name" value="IGPS_HisA/HisF"/>
</dbReference>
<dbReference type="InterPro" id="IPR011060">
    <property type="entry name" value="RibuloseP-bd_barrel"/>
</dbReference>
<dbReference type="NCBIfam" id="TIGR00735">
    <property type="entry name" value="hisF"/>
    <property type="match status" value="1"/>
</dbReference>
<dbReference type="PANTHER" id="PTHR21235:SF2">
    <property type="entry name" value="IMIDAZOLE GLYCEROL PHOSPHATE SYNTHASE HISHF"/>
    <property type="match status" value="1"/>
</dbReference>
<dbReference type="PANTHER" id="PTHR21235">
    <property type="entry name" value="IMIDAZOLE GLYCEROL PHOSPHATE SYNTHASE SUBUNIT HISF/H IGP SYNTHASE SUBUNIT HISF/H"/>
    <property type="match status" value="1"/>
</dbReference>
<dbReference type="Pfam" id="PF00977">
    <property type="entry name" value="His_biosynth"/>
    <property type="match status" value="1"/>
</dbReference>
<dbReference type="SUPFAM" id="SSF51366">
    <property type="entry name" value="Ribulose-phoshate binding barrel"/>
    <property type="match status" value="1"/>
</dbReference>
<sequence>MLAKRIIPCLDVRDGQVVKGVQFRNHEIIGDIVPLAQHYAQEGADELVFYDITASSDGRTVDKSWVERIAQVIDIPFCVAGGIKTIEDAEKLFAFGADKISINSPALADPTLISRLADRFGVQAIVVGIDSWFEQETGKYWVNQYTGDETRTRQTHWQLLDWVKEVQQCGAGEIVLNMMNQDGLRNGYDLAQLKLVRGVCRVPLIASGGAGKMVHFRDAFIEAKVDGALAASVFHKQIIEIGELKSYLVKSAIEIRSE</sequence>
<organism>
    <name type="scientific">Haemophilus influenzae (strain PittEE)</name>
    <dbReference type="NCBI Taxonomy" id="374930"/>
    <lineage>
        <taxon>Bacteria</taxon>
        <taxon>Pseudomonadati</taxon>
        <taxon>Pseudomonadota</taxon>
        <taxon>Gammaproteobacteria</taxon>
        <taxon>Pasteurellales</taxon>
        <taxon>Pasteurellaceae</taxon>
        <taxon>Haemophilus</taxon>
    </lineage>
</organism>
<comment type="function">
    <text evidence="1">IGPS catalyzes the conversion of PRFAR and glutamine to IGP, AICAR and glutamate. The HisF subunit catalyzes the cyclization activity that produces IGP and AICAR from PRFAR using the ammonia provided by the HisH subunit.</text>
</comment>
<comment type="catalytic activity">
    <reaction evidence="1">
        <text>5-[(5-phospho-1-deoxy-D-ribulos-1-ylimino)methylamino]-1-(5-phospho-beta-D-ribosyl)imidazole-4-carboxamide + L-glutamine = D-erythro-1-(imidazol-4-yl)glycerol 3-phosphate + 5-amino-1-(5-phospho-beta-D-ribosyl)imidazole-4-carboxamide + L-glutamate + H(+)</text>
        <dbReference type="Rhea" id="RHEA:24793"/>
        <dbReference type="ChEBI" id="CHEBI:15378"/>
        <dbReference type="ChEBI" id="CHEBI:29985"/>
        <dbReference type="ChEBI" id="CHEBI:58278"/>
        <dbReference type="ChEBI" id="CHEBI:58359"/>
        <dbReference type="ChEBI" id="CHEBI:58475"/>
        <dbReference type="ChEBI" id="CHEBI:58525"/>
        <dbReference type="EC" id="4.3.2.10"/>
    </reaction>
</comment>
<comment type="pathway">
    <text evidence="1">Amino-acid biosynthesis; L-histidine biosynthesis; L-histidine from 5-phospho-alpha-D-ribose 1-diphosphate: step 5/9.</text>
</comment>
<comment type="subunit">
    <text evidence="1">Heterodimer of HisH and HisF.</text>
</comment>
<comment type="subcellular location">
    <subcellularLocation>
        <location evidence="1">Cytoplasm</location>
    </subcellularLocation>
</comment>
<comment type="similarity">
    <text evidence="1">Belongs to the HisA/HisF family.</text>
</comment>
<accession>A5UA15</accession>
<keyword id="KW-0028">Amino-acid biosynthesis</keyword>
<keyword id="KW-0963">Cytoplasm</keyword>
<keyword id="KW-0368">Histidine biosynthesis</keyword>
<keyword id="KW-0456">Lyase</keyword>
<gene>
    <name evidence="1" type="primary">hisF</name>
    <name type="ordered locus">CGSHiEE_00620</name>
</gene>
<evidence type="ECO:0000255" key="1">
    <source>
        <dbReference type="HAMAP-Rule" id="MF_01013"/>
    </source>
</evidence>
<name>HIS6_HAEIE</name>
<feature type="chain" id="PRO_1000063066" description="Imidazole glycerol phosphate synthase subunit HisF">
    <location>
        <begin position="1"/>
        <end position="258"/>
    </location>
</feature>
<feature type="active site" evidence="1">
    <location>
        <position position="11"/>
    </location>
</feature>
<feature type="active site" evidence="1">
    <location>
        <position position="130"/>
    </location>
</feature>
<protein>
    <recommendedName>
        <fullName evidence="1">Imidazole glycerol phosphate synthase subunit HisF</fullName>
        <ecNumber evidence="1">4.3.2.10</ecNumber>
    </recommendedName>
    <alternativeName>
        <fullName evidence="1">IGP synthase cyclase subunit</fullName>
    </alternativeName>
    <alternativeName>
        <fullName evidence="1">IGP synthase subunit HisF</fullName>
    </alternativeName>
    <alternativeName>
        <fullName evidence="1">ImGP synthase subunit HisF</fullName>
        <shortName evidence="1">IGPS subunit HisF</shortName>
    </alternativeName>
</protein>
<proteinExistence type="inferred from homology"/>
<reference key="1">
    <citation type="journal article" date="2007" name="Genome Biol.">
        <title>Characterization and modeling of the Haemophilus influenzae core and supragenomes based on the complete genomic sequences of Rd and 12 clinical nontypeable strains.</title>
        <authorList>
            <person name="Hogg J.S."/>
            <person name="Hu F.Z."/>
            <person name="Janto B."/>
            <person name="Boissy R."/>
            <person name="Hayes J."/>
            <person name="Keefe R."/>
            <person name="Post J.C."/>
            <person name="Ehrlich G.D."/>
        </authorList>
    </citation>
    <scope>NUCLEOTIDE SEQUENCE [LARGE SCALE GENOMIC DNA]</scope>
    <source>
        <strain>PittEE</strain>
    </source>
</reference>